<gene>
    <name type="primary">SRB5</name>
    <name type="synonym">MED18</name>
    <name type="ordered locus">YALI0B23320g</name>
</gene>
<proteinExistence type="inferred from homology"/>
<comment type="function">
    <text evidence="1">Component of the Mediator complex, a coactivator involved in the regulated transcription of nearly all RNA polymerase II-dependent genes. Mediator functions as a bridge to convey information from gene-specific regulatory proteins to the basal RNA polymerase II transcription machinery. Mediator is recruited to promoters by direct interactions with regulatory proteins and serves as a scaffold for the assembly of a functional preinitiation complex with RNA polymerase II and the general transcription factors (By similarity).</text>
</comment>
<comment type="subunit">
    <text evidence="1">Component of the Mediator complex.</text>
</comment>
<comment type="subcellular location">
    <subcellularLocation>
        <location evidence="1">Nucleus</location>
    </subcellularLocation>
</comment>
<comment type="similarity">
    <text evidence="3">Belongs to the Mediator complex subunit 18 family.</text>
</comment>
<sequence>MQQISLYAKISNSQLKICLHALASLTGMDPITILQHTMVWAPAQKYTPKILPGQGGQLDQYRIHVTNDNKNEDKEKIISYVQSKDSKEDIHNLANRQWHFQIMEMPEAGKQKTTSQSISSWSVKKGDSFQFLQSLAYKFQYEYWQKGFQFVYGNAVIQLTRIHILDQTTKNIKLLDPSKQWLVKVYIDVGHLTDIEALNKAVKELEKVKTELHGLMNLEIPDRNAFDTRIR</sequence>
<feature type="chain" id="PRO_0000304765" description="Mediator of RNA polymerase II transcription subunit 18">
    <location>
        <begin position="1"/>
        <end position="231"/>
    </location>
</feature>
<feature type="coiled-coil region" evidence="2">
    <location>
        <begin position="191"/>
        <end position="218"/>
    </location>
</feature>
<reference key="1">
    <citation type="journal article" date="2004" name="Nature">
        <title>Genome evolution in yeasts.</title>
        <authorList>
            <person name="Dujon B."/>
            <person name="Sherman D."/>
            <person name="Fischer G."/>
            <person name="Durrens P."/>
            <person name="Casaregola S."/>
            <person name="Lafontaine I."/>
            <person name="de Montigny J."/>
            <person name="Marck C."/>
            <person name="Neuveglise C."/>
            <person name="Talla E."/>
            <person name="Goffard N."/>
            <person name="Frangeul L."/>
            <person name="Aigle M."/>
            <person name="Anthouard V."/>
            <person name="Babour A."/>
            <person name="Barbe V."/>
            <person name="Barnay S."/>
            <person name="Blanchin S."/>
            <person name="Beckerich J.-M."/>
            <person name="Beyne E."/>
            <person name="Bleykasten C."/>
            <person name="Boisrame A."/>
            <person name="Boyer J."/>
            <person name="Cattolico L."/>
            <person name="Confanioleri F."/>
            <person name="de Daruvar A."/>
            <person name="Despons L."/>
            <person name="Fabre E."/>
            <person name="Fairhead C."/>
            <person name="Ferry-Dumazet H."/>
            <person name="Groppi A."/>
            <person name="Hantraye F."/>
            <person name="Hennequin C."/>
            <person name="Jauniaux N."/>
            <person name="Joyet P."/>
            <person name="Kachouri R."/>
            <person name="Kerrest A."/>
            <person name="Koszul R."/>
            <person name="Lemaire M."/>
            <person name="Lesur I."/>
            <person name="Ma L."/>
            <person name="Muller H."/>
            <person name="Nicaud J.-M."/>
            <person name="Nikolski M."/>
            <person name="Oztas S."/>
            <person name="Ozier-Kalogeropoulos O."/>
            <person name="Pellenz S."/>
            <person name="Potier S."/>
            <person name="Richard G.-F."/>
            <person name="Straub M.-L."/>
            <person name="Suleau A."/>
            <person name="Swennen D."/>
            <person name="Tekaia F."/>
            <person name="Wesolowski-Louvel M."/>
            <person name="Westhof E."/>
            <person name="Wirth B."/>
            <person name="Zeniou-Meyer M."/>
            <person name="Zivanovic Y."/>
            <person name="Bolotin-Fukuhara M."/>
            <person name="Thierry A."/>
            <person name="Bouchier C."/>
            <person name="Caudron B."/>
            <person name="Scarpelli C."/>
            <person name="Gaillardin C."/>
            <person name="Weissenbach J."/>
            <person name="Wincker P."/>
            <person name="Souciet J.-L."/>
        </authorList>
    </citation>
    <scope>NUCLEOTIDE SEQUENCE [LARGE SCALE GENOMIC DNA]</scope>
    <source>
        <strain>CLIB 122 / E 150</strain>
    </source>
</reference>
<name>MED18_YARLI</name>
<organism>
    <name type="scientific">Yarrowia lipolytica (strain CLIB 122 / E 150)</name>
    <name type="common">Yeast</name>
    <name type="synonym">Candida lipolytica</name>
    <dbReference type="NCBI Taxonomy" id="284591"/>
    <lineage>
        <taxon>Eukaryota</taxon>
        <taxon>Fungi</taxon>
        <taxon>Dikarya</taxon>
        <taxon>Ascomycota</taxon>
        <taxon>Saccharomycotina</taxon>
        <taxon>Dipodascomycetes</taxon>
        <taxon>Dipodascales</taxon>
        <taxon>Dipodascales incertae sedis</taxon>
        <taxon>Yarrowia</taxon>
    </lineage>
</organism>
<evidence type="ECO:0000250" key="1"/>
<evidence type="ECO:0000255" key="2"/>
<evidence type="ECO:0000305" key="3"/>
<accession>Q6CDK1</accession>
<keyword id="KW-0010">Activator</keyword>
<keyword id="KW-0175">Coiled coil</keyword>
<keyword id="KW-0539">Nucleus</keyword>
<keyword id="KW-1185">Reference proteome</keyword>
<keyword id="KW-0804">Transcription</keyword>
<keyword id="KW-0805">Transcription regulation</keyword>
<dbReference type="EMBL" id="CR382128">
    <property type="protein sequence ID" value="CAG83514.1"/>
    <property type="molecule type" value="Genomic_DNA"/>
</dbReference>
<dbReference type="RefSeq" id="XP_501261.1">
    <property type="nucleotide sequence ID" value="XM_501261.1"/>
</dbReference>
<dbReference type="SMR" id="Q6CDK1"/>
<dbReference type="FunCoup" id="Q6CDK1">
    <property type="interactions" value="125"/>
</dbReference>
<dbReference type="STRING" id="284591.Q6CDK1"/>
<dbReference type="EnsemblFungi" id="CAG83514">
    <property type="protein sequence ID" value="CAG83514"/>
    <property type="gene ID" value="YALI0_B23320g"/>
</dbReference>
<dbReference type="KEGG" id="yli:2906623"/>
<dbReference type="VEuPathDB" id="FungiDB:YALI0_B23320g"/>
<dbReference type="HOGENOM" id="CLU_1200630_0_0_1"/>
<dbReference type="InParanoid" id="Q6CDK1"/>
<dbReference type="OMA" id="PDRKCMD"/>
<dbReference type="OrthoDB" id="63545at4891"/>
<dbReference type="Proteomes" id="UP000001300">
    <property type="component" value="Chromosome B"/>
</dbReference>
<dbReference type="GO" id="GO:0070847">
    <property type="term" value="C:core mediator complex"/>
    <property type="evidence" value="ECO:0000318"/>
    <property type="project" value="GO_Central"/>
</dbReference>
<dbReference type="GO" id="GO:0016592">
    <property type="term" value="C:mediator complex"/>
    <property type="evidence" value="ECO:0000318"/>
    <property type="project" value="GO_Central"/>
</dbReference>
<dbReference type="GO" id="GO:0003712">
    <property type="term" value="F:transcription coregulator activity"/>
    <property type="evidence" value="ECO:0000318"/>
    <property type="project" value="GO_Central"/>
</dbReference>
<dbReference type="GO" id="GO:0060261">
    <property type="term" value="P:positive regulation of transcription initiation by RNA polymerase II"/>
    <property type="evidence" value="ECO:0000318"/>
    <property type="project" value="GO_Central"/>
</dbReference>
<dbReference type="Gene3D" id="2.40.320.10">
    <property type="entry name" value="Hypothetical Protein Pfu-838710-001"/>
    <property type="match status" value="1"/>
</dbReference>
<dbReference type="InterPro" id="IPR019095">
    <property type="entry name" value="Mediator_Med18"/>
</dbReference>
<dbReference type="PANTHER" id="PTHR13321:SF2">
    <property type="entry name" value="MEDIATOR OF RNA POLYMERASE II TRANSCRIPTION SUBUNIT 18"/>
    <property type="match status" value="1"/>
</dbReference>
<dbReference type="PANTHER" id="PTHR13321">
    <property type="entry name" value="MEDIATOR OF RNA POLYMERASE II TRANSCRIPTION, SUBUNIT 18"/>
    <property type="match status" value="1"/>
</dbReference>
<dbReference type="Pfam" id="PF09637">
    <property type="entry name" value="Med18"/>
    <property type="match status" value="1"/>
</dbReference>
<protein>
    <recommendedName>
        <fullName>Mediator of RNA polymerase II transcription subunit 18</fullName>
    </recommendedName>
    <alternativeName>
        <fullName>Mediator complex subunit 18</fullName>
    </alternativeName>
</protein>